<protein>
    <recommendedName>
        <fullName evidence="1">Arginine repressor</fullName>
    </recommendedName>
</protein>
<feature type="chain" id="PRO_1000023570" description="Arginine repressor">
    <location>
        <begin position="1"/>
        <end position="151"/>
    </location>
</feature>
<comment type="function">
    <text evidence="1">Regulates arginine biosynthesis genes.</text>
</comment>
<comment type="pathway">
    <text>Amino-acid biosynthesis; L-arginine biosynthesis [regulation].</text>
</comment>
<comment type="subcellular location">
    <subcellularLocation>
        <location evidence="1">Cytoplasm</location>
    </subcellularLocation>
</comment>
<comment type="similarity">
    <text evidence="1">Belongs to the ArgR family.</text>
</comment>
<organism>
    <name type="scientific">Haemophilus influenzae (strain PittGG)</name>
    <dbReference type="NCBI Taxonomy" id="374931"/>
    <lineage>
        <taxon>Bacteria</taxon>
        <taxon>Pseudomonadati</taxon>
        <taxon>Pseudomonadota</taxon>
        <taxon>Gammaproteobacteria</taxon>
        <taxon>Pasteurellales</taxon>
        <taxon>Pasteurellaceae</taxon>
        <taxon>Haemophilus</taxon>
    </lineage>
</organism>
<dbReference type="EMBL" id="CP000672">
    <property type="protein sequence ID" value="ABR00728.1"/>
    <property type="molecule type" value="Genomic_DNA"/>
</dbReference>
<dbReference type="SMR" id="A5UIX2"/>
<dbReference type="KEGG" id="hiq:CGSHiGG_09770"/>
<dbReference type="HOGENOM" id="CLU_097103_2_0_6"/>
<dbReference type="UniPathway" id="UPA00068"/>
<dbReference type="Proteomes" id="UP000001990">
    <property type="component" value="Chromosome"/>
</dbReference>
<dbReference type="GO" id="GO:0005737">
    <property type="term" value="C:cytoplasm"/>
    <property type="evidence" value="ECO:0007669"/>
    <property type="project" value="UniProtKB-SubCell"/>
</dbReference>
<dbReference type="GO" id="GO:0034618">
    <property type="term" value="F:arginine binding"/>
    <property type="evidence" value="ECO:0007669"/>
    <property type="project" value="InterPro"/>
</dbReference>
<dbReference type="GO" id="GO:0003677">
    <property type="term" value="F:DNA binding"/>
    <property type="evidence" value="ECO:0007669"/>
    <property type="project" value="UniProtKB-KW"/>
</dbReference>
<dbReference type="GO" id="GO:0003700">
    <property type="term" value="F:DNA-binding transcription factor activity"/>
    <property type="evidence" value="ECO:0007669"/>
    <property type="project" value="UniProtKB-UniRule"/>
</dbReference>
<dbReference type="GO" id="GO:0006526">
    <property type="term" value="P:L-arginine biosynthetic process"/>
    <property type="evidence" value="ECO:0007669"/>
    <property type="project" value="UniProtKB-UniPathway"/>
</dbReference>
<dbReference type="GO" id="GO:0051259">
    <property type="term" value="P:protein complex oligomerization"/>
    <property type="evidence" value="ECO:0007669"/>
    <property type="project" value="InterPro"/>
</dbReference>
<dbReference type="GO" id="GO:1900079">
    <property type="term" value="P:regulation of arginine biosynthetic process"/>
    <property type="evidence" value="ECO:0007669"/>
    <property type="project" value="UniProtKB-UniRule"/>
</dbReference>
<dbReference type="Gene3D" id="3.30.1360.40">
    <property type="match status" value="1"/>
</dbReference>
<dbReference type="Gene3D" id="1.10.10.10">
    <property type="entry name" value="Winged helix-like DNA-binding domain superfamily/Winged helix DNA-binding domain"/>
    <property type="match status" value="1"/>
</dbReference>
<dbReference type="HAMAP" id="MF_00173">
    <property type="entry name" value="Arg_repressor"/>
    <property type="match status" value="1"/>
</dbReference>
<dbReference type="InterPro" id="IPR001669">
    <property type="entry name" value="Arg_repress"/>
</dbReference>
<dbReference type="InterPro" id="IPR020899">
    <property type="entry name" value="Arg_repress_C"/>
</dbReference>
<dbReference type="InterPro" id="IPR036251">
    <property type="entry name" value="Arg_repress_C_sf"/>
</dbReference>
<dbReference type="InterPro" id="IPR020900">
    <property type="entry name" value="Arg_repress_DNA-bd"/>
</dbReference>
<dbReference type="InterPro" id="IPR036388">
    <property type="entry name" value="WH-like_DNA-bd_sf"/>
</dbReference>
<dbReference type="InterPro" id="IPR036390">
    <property type="entry name" value="WH_DNA-bd_sf"/>
</dbReference>
<dbReference type="NCBIfam" id="TIGR01529">
    <property type="entry name" value="argR_whole"/>
    <property type="match status" value="1"/>
</dbReference>
<dbReference type="NCBIfam" id="NF003457">
    <property type="entry name" value="PRK05066.1"/>
    <property type="match status" value="1"/>
</dbReference>
<dbReference type="PANTHER" id="PTHR34471">
    <property type="entry name" value="ARGININE REPRESSOR"/>
    <property type="match status" value="1"/>
</dbReference>
<dbReference type="PANTHER" id="PTHR34471:SF1">
    <property type="entry name" value="ARGININE REPRESSOR"/>
    <property type="match status" value="1"/>
</dbReference>
<dbReference type="Pfam" id="PF01316">
    <property type="entry name" value="Arg_repressor"/>
    <property type="match status" value="1"/>
</dbReference>
<dbReference type="Pfam" id="PF02863">
    <property type="entry name" value="Arg_repressor_C"/>
    <property type="match status" value="1"/>
</dbReference>
<dbReference type="PRINTS" id="PR01467">
    <property type="entry name" value="ARGREPRESSOR"/>
</dbReference>
<dbReference type="SUPFAM" id="SSF55252">
    <property type="entry name" value="C-terminal domain of arginine repressor"/>
    <property type="match status" value="1"/>
</dbReference>
<dbReference type="SUPFAM" id="SSF46785">
    <property type="entry name" value="Winged helix' DNA-binding domain"/>
    <property type="match status" value="1"/>
</dbReference>
<accession>A5UIX2</accession>
<keyword id="KW-0028">Amino-acid biosynthesis</keyword>
<keyword id="KW-0055">Arginine biosynthesis</keyword>
<keyword id="KW-0963">Cytoplasm</keyword>
<keyword id="KW-0238">DNA-binding</keyword>
<keyword id="KW-0678">Repressor</keyword>
<keyword id="KW-0804">Transcription</keyword>
<keyword id="KW-0805">Transcription regulation</keyword>
<gene>
    <name evidence="1" type="primary">argR</name>
    <name type="ordered locus">CGSHiGG_09770</name>
</gene>
<reference key="1">
    <citation type="journal article" date="2007" name="Genome Biol.">
        <title>Characterization and modeling of the Haemophilus influenzae core and supragenomes based on the complete genomic sequences of Rd and 12 clinical nontypeable strains.</title>
        <authorList>
            <person name="Hogg J.S."/>
            <person name="Hu F.Z."/>
            <person name="Janto B."/>
            <person name="Boissy R."/>
            <person name="Hayes J."/>
            <person name="Keefe R."/>
            <person name="Post J.C."/>
            <person name="Ehrlich G.D."/>
        </authorList>
    </citation>
    <scope>NUCLEOTIDE SEQUENCE [LARGE SCALE GENOMIC DNA]</scope>
    <source>
        <strain>PittGG</strain>
    </source>
</reference>
<sequence length="151" mass="16707">MTDNLTRAFKELLNQERFGSQSEIVDALKKQGFTGINQSKISRMLSKFGAVRTRNTKMEMVYCLPNELSVPNTSSPLKNLVLDVDHNAMLIVIKTTPGAAQLIARLLDSIGKSEGILGTIAGDDTIFVTPTNDKPIDELLQNIQRLFENTL</sequence>
<name>ARGR_HAEIG</name>
<evidence type="ECO:0000255" key="1">
    <source>
        <dbReference type="HAMAP-Rule" id="MF_00173"/>
    </source>
</evidence>
<proteinExistence type="inferred from homology"/>